<dbReference type="EC" id="6.1.1.3" evidence="1"/>
<dbReference type="EMBL" id="CP000049">
    <property type="protein sequence ID" value="AAX18036.1"/>
    <property type="molecule type" value="Genomic_DNA"/>
</dbReference>
<dbReference type="RefSeq" id="WP_011772654.1">
    <property type="nucleotide sequence ID" value="NC_008710.1"/>
</dbReference>
<dbReference type="SMR" id="A1R0E4"/>
<dbReference type="KEGG" id="btu:BT0720"/>
<dbReference type="eggNOG" id="COG0441">
    <property type="taxonomic scope" value="Bacteria"/>
</dbReference>
<dbReference type="HOGENOM" id="CLU_008554_0_1_12"/>
<dbReference type="Proteomes" id="UP000001205">
    <property type="component" value="Chromosome"/>
</dbReference>
<dbReference type="GO" id="GO:0005737">
    <property type="term" value="C:cytoplasm"/>
    <property type="evidence" value="ECO:0007669"/>
    <property type="project" value="UniProtKB-SubCell"/>
</dbReference>
<dbReference type="GO" id="GO:0005524">
    <property type="term" value="F:ATP binding"/>
    <property type="evidence" value="ECO:0007669"/>
    <property type="project" value="UniProtKB-UniRule"/>
</dbReference>
<dbReference type="GO" id="GO:0046872">
    <property type="term" value="F:metal ion binding"/>
    <property type="evidence" value="ECO:0007669"/>
    <property type="project" value="UniProtKB-KW"/>
</dbReference>
<dbReference type="GO" id="GO:0004829">
    <property type="term" value="F:threonine-tRNA ligase activity"/>
    <property type="evidence" value="ECO:0007669"/>
    <property type="project" value="UniProtKB-UniRule"/>
</dbReference>
<dbReference type="GO" id="GO:0000049">
    <property type="term" value="F:tRNA binding"/>
    <property type="evidence" value="ECO:0007669"/>
    <property type="project" value="UniProtKB-KW"/>
</dbReference>
<dbReference type="GO" id="GO:0006435">
    <property type="term" value="P:threonyl-tRNA aminoacylation"/>
    <property type="evidence" value="ECO:0007669"/>
    <property type="project" value="UniProtKB-UniRule"/>
</dbReference>
<dbReference type="CDD" id="cd00860">
    <property type="entry name" value="ThrRS_anticodon"/>
    <property type="match status" value="1"/>
</dbReference>
<dbReference type="CDD" id="cd00771">
    <property type="entry name" value="ThrRS_core"/>
    <property type="match status" value="1"/>
</dbReference>
<dbReference type="FunFam" id="3.30.930.10:FF:000002">
    <property type="entry name" value="Threonine--tRNA ligase"/>
    <property type="match status" value="1"/>
</dbReference>
<dbReference type="FunFam" id="3.40.50.800:FF:000001">
    <property type="entry name" value="Threonine--tRNA ligase"/>
    <property type="match status" value="1"/>
</dbReference>
<dbReference type="FunFam" id="3.30.980.10:FF:000005">
    <property type="entry name" value="Threonyl-tRNA synthetase, mitochondrial"/>
    <property type="match status" value="1"/>
</dbReference>
<dbReference type="Gene3D" id="3.30.54.20">
    <property type="match status" value="1"/>
</dbReference>
<dbReference type="Gene3D" id="3.40.50.800">
    <property type="entry name" value="Anticodon-binding domain"/>
    <property type="match status" value="1"/>
</dbReference>
<dbReference type="Gene3D" id="3.30.930.10">
    <property type="entry name" value="Bira Bifunctional Protein, Domain 2"/>
    <property type="match status" value="1"/>
</dbReference>
<dbReference type="Gene3D" id="3.30.980.10">
    <property type="entry name" value="Threonyl-trna Synthetase, Chain A, domain 2"/>
    <property type="match status" value="1"/>
</dbReference>
<dbReference type="HAMAP" id="MF_00184">
    <property type="entry name" value="Thr_tRNA_synth"/>
    <property type="match status" value="1"/>
</dbReference>
<dbReference type="InterPro" id="IPR002314">
    <property type="entry name" value="aa-tRNA-synt_IIb"/>
</dbReference>
<dbReference type="InterPro" id="IPR006195">
    <property type="entry name" value="aa-tRNA-synth_II"/>
</dbReference>
<dbReference type="InterPro" id="IPR045864">
    <property type="entry name" value="aa-tRNA-synth_II/BPL/LPL"/>
</dbReference>
<dbReference type="InterPro" id="IPR004154">
    <property type="entry name" value="Anticodon-bd"/>
</dbReference>
<dbReference type="InterPro" id="IPR036621">
    <property type="entry name" value="Anticodon-bd_dom_sf"/>
</dbReference>
<dbReference type="InterPro" id="IPR002320">
    <property type="entry name" value="Thr-tRNA-ligase_IIa"/>
</dbReference>
<dbReference type="InterPro" id="IPR018163">
    <property type="entry name" value="Thr/Ala-tRNA-synth_IIc_edit"/>
</dbReference>
<dbReference type="InterPro" id="IPR047246">
    <property type="entry name" value="ThrRS_anticodon"/>
</dbReference>
<dbReference type="InterPro" id="IPR033728">
    <property type="entry name" value="ThrRS_core"/>
</dbReference>
<dbReference type="InterPro" id="IPR012947">
    <property type="entry name" value="tRNA_SAD"/>
</dbReference>
<dbReference type="NCBIfam" id="TIGR00418">
    <property type="entry name" value="thrS"/>
    <property type="match status" value="1"/>
</dbReference>
<dbReference type="PANTHER" id="PTHR11451:SF44">
    <property type="entry name" value="THREONINE--TRNA LIGASE, CHLOROPLASTIC_MITOCHONDRIAL 2"/>
    <property type="match status" value="1"/>
</dbReference>
<dbReference type="PANTHER" id="PTHR11451">
    <property type="entry name" value="THREONINE-TRNA LIGASE"/>
    <property type="match status" value="1"/>
</dbReference>
<dbReference type="Pfam" id="PF03129">
    <property type="entry name" value="HGTP_anticodon"/>
    <property type="match status" value="1"/>
</dbReference>
<dbReference type="Pfam" id="PF00587">
    <property type="entry name" value="tRNA-synt_2b"/>
    <property type="match status" value="1"/>
</dbReference>
<dbReference type="Pfam" id="PF07973">
    <property type="entry name" value="tRNA_SAD"/>
    <property type="match status" value="1"/>
</dbReference>
<dbReference type="PRINTS" id="PR01047">
    <property type="entry name" value="TRNASYNTHTHR"/>
</dbReference>
<dbReference type="SMART" id="SM00863">
    <property type="entry name" value="tRNA_SAD"/>
    <property type="match status" value="1"/>
</dbReference>
<dbReference type="SUPFAM" id="SSF52954">
    <property type="entry name" value="Class II aaRS ABD-related"/>
    <property type="match status" value="1"/>
</dbReference>
<dbReference type="SUPFAM" id="SSF55681">
    <property type="entry name" value="Class II aaRS and biotin synthetases"/>
    <property type="match status" value="1"/>
</dbReference>
<dbReference type="SUPFAM" id="SSF55186">
    <property type="entry name" value="ThrRS/AlaRS common domain"/>
    <property type="match status" value="1"/>
</dbReference>
<dbReference type="PROSITE" id="PS50862">
    <property type="entry name" value="AA_TRNA_LIGASE_II"/>
    <property type="match status" value="1"/>
</dbReference>
<comment type="function">
    <text evidence="1">Catalyzes the attachment of threonine to tRNA(Thr) in a two-step reaction: L-threonine is first activated by ATP to form Thr-AMP and then transferred to the acceptor end of tRNA(Thr). Also edits incorrectly charged L-seryl-tRNA(Thr).</text>
</comment>
<comment type="catalytic activity">
    <reaction evidence="1">
        <text>tRNA(Thr) + L-threonine + ATP = L-threonyl-tRNA(Thr) + AMP + diphosphate + H(+)</text>
        <dbReference type="Rhea" id="RHEA:24624"/>
        <dbReference type="Rhea" id="RHEA-COMP:9670"/>
        <dbReference type="Rhea" id="RHEA-COMP:9704"/>
        <dbReference type="ChEBI" id="CHEBI:15378"/>
        <dbReference type="ChEBI" id="CHEBI:30616"/>
        <dbReference type="ChEBI" id="CHEBI:33019"/>
        <dbReference type="ChEBI" id="CHEBI:57926"/>
        <dbReference type="ChEBI" id="CHEBI:78442"/>
        <dbReference type="ChEBI" id="CHEBI:78534"/>
        <dbReference type="ChEBI" id="CHEBI:456215"/>
        <dbReference type="EC" id="6.1.1.3"/>
    </reaction>
</comment>
<comment type="cofactor">
    <cofactor evidence="1">
        <name>Zn(2+)</name>
        <dbReference type="ChEBI" id="CHEBI:29105"/>
    </cofactor>
    <text evidence="1">Binds 1 zinc ion per subunit.</text>
</comment>
<comment type="subunit">
    <text evidence="1">Homodimer.</text>
</comment>
<comment type="subcellular location">
    <subcellularLocation>
        <location evidence="1">Cytoplasm</location>
    </subcellularLocation>
</comment>
<comment type="similarity">
    <text evidence="1">Belongs to the class-II aminoacyl-tRNA synthetase family.</text>
</comment>
<evidence type="ECO:0000255" key="1">
    <source>
        <dbReference type="HAMAP-Rule" id="MF_00184"/>
    </source>
</evidence>
<feature type="chain" id="PRO_1000199531" description="Threonine--tRNA ligase">
    <location>
        <begin position="1"/>
        <end position="583"/>
    </location>
</feature>
<feature type="region of interest" description="Catalytic" evidence="1">
    <location>
        <begin position="185"/>
        <end position="478"/>
    </location>
</feature>
<feature type="binding site" evidence="1">
    <location>
        <position position="278"/>
    </location>
    <ligand>
        <name>Zn(2+)</name>
        <dbReference type="ChEBI" id="CHEBI:29105"/>
    </ligand>
</feature>
<feature type="binding site" evidence="1">
    <location>
        <position position="329"/>
    </location>
    <ligand>
        <name>Zn(2+)</name>
        <dbReference type="ChEBI" id="CHEBI:29105"/>
    </ligand>
</feature>
<feature type="binding site" evidence="1">
    <location>
        <position position="455"/>
    </location>
    <ligand>
        <name>Zn(2+)</name>
        <dbReference type="ChEBI" id="CHEBI:29105"/>
    </ligand>
</feature>
<organism>
    <name type="scientific">Borrelia turicatae (strain 91E135)</name>
    <dbReference type="NCBI Taxonomy" id="314724"/>
    <lineage>
        <taxon>Bacteria</taxon>
        <taxon>Pseudomonadati</taxon>
        <taxon>Spirochaetota</taxon>
        <taxon>Spirochaetia</taxon>
        <taxon>Spirochaetales</taxon>
        <taxon>Borreliaceae</taxon>
        <taxon>Borrelia</taxon>
    </lineage>
</organism>
<reference key="1">
    <citation type="submission" date="2004-12" db="EMBL/GenBank/DDBJ databases">
        <title>The genome sequence of Borrelia hermsii and Borrelia turicatae: comparative analysis of two agents of endemic N. America relapsing fever.</title>
        <authorList>
            <person name="Porcella S.F."/>
            <person name="Raffel S.J."/>
            <person name="Schrumpf M.E."/>
            <person name="Montgomery B."/>
            <person name="Smith T."/>
            <person name="Schwan T.G."/>
        </authorList>
    </citation>
    <scope>NUCLEOTIDE SEQUENCE [LARGE SCALE GENOMIC DNA]</scope>
    <source>
        <strain>91E135</strain>
    </source>
</reference>
<proteinExistence type="inferred from homology"/>
<name>SYT_BORT9</name>
<sequence length="583" mass="68226">MSEKLDKEDVLYKKRHSIAHVMAEAVIELFPNTKIAIGPPIKDGFYYDFDFEKHIIEDDLLLIEQKMREILKTGSSFVKEVITKEQALMLFKDEPYKIDLIHELDIADEISIYKSHNFTDLCKGPHIDNMGKIDPKAFKLISIAGAYWRGDEKNKMLTRIYGTLWNNEKDLKAYLKLREEIKRRDHRKLGRELDLFSVHEEIGPGLIFFHPSGARIRALIEDFWREEHFKNGYDILFTPHVGKSWLWETSGHLDFYKESMFEKMEMDKSNYYVKPMNCPFHIAIYNTGRHSYRDLPFRWAELGTVYRYEKVGALHGTMRVRGFTQDDAHIICTYDQVKFEVQEVLRFALYMWNKFGFTALKAYLSTKPEKSVGDEDDWIMSVKVLKEALINLGIDYDIDEGGGAFYGPKIDLKIIDSLGREWQMSTIQFDFNLPARFKMTYTAEDGKERQPFMIHRALLGSIERFFGILVEHYGGAFPVWLAPLQVVIIPVNNIVEEYALEVLSRFKKEGIRIKLDNDCNMRMNAKIRQYQSQKVPYMFIVGEKEVVEGKISIRTRTNEQINGLELKEALEFVKLKVSNKEIL</sequence>
<accession>A1R0E4</accession>
<gene>
    <name evidence="1" type="primary">thrS</name>
    <name type="ordered locus">BT0720</name>
</gene>
<keyword id="KW-0030">Aminoacyl-tRNA synthetase</keyword>
<keyword id="KW-0067">ATP-binding</keyword>
<keyword id="KW-0963">Cytoplasm</keyword>
<keyword id="KW-0436">Ligase</keyword>
<keyword id="KW-0479">Metal-binding</keyword>
<keyword id="KW-0547">Nucleotide-binding</keyword>
<keyword id="KW-0648">Protein biosynthesis</keyword>
<keyword id="KW-1185">Reference proteome</keyword>
<keyword id="KW-0694">RNA-binding</keyword>
<keyword id="KW-0820">tRNA-binding</keyword>
<keyword id="KW-0862">Zinc</keyword>
<protein>
    <recommendedName>
        <fullName evidence="1">Threonine--tRNA ligase</fullName>
        <ecNumber evidence="1">6.1.1.3</ecNumber>
    </recommendedName>
    <alternativeName>
        <fullName evidence="1">Threonyl-tRNA synthetase</fullName>
        <shortName evidence="1">ThrRS</shortName>
    </alternativeName>
</protein>